<accession>Q74FG0</accession>
<dbReference type="EC" id="3.1.26.4" evidence="1"/>
<dbReference type="EMBL" id="AE017180">
    <property type="protein sequence ID" value="AAR33979.1"/>
    <property type="molecule type" value="Genomic_DNA"/>
</dbReference>
<dbReference type="RefSeq" id="NP_951706.1">
    <property type="nucleotide sequence ID" value="NC_002939.5"/>
</dbReference>
<dbReference type="RefSeq" id="WP_010941310.1">
    <property type="nucleotide sequence ID" value="NC_002939.5"/>
</dbReference>
<dbReference type="SMR" id="Q74FG0"/>
<dbReference type="FunCoup" id="Q74FG0">
    <property type="interactions" value="357"/>
</dbReference>
<dbReference type="STRING" id="243231.GSU0649"/>
<dbReference type="EnsemblBacteria" id="AAR33979">
    <property type="protein sequence ID" value="AAR33979"/>
    <property type="gene ID" value="GSU0649"/>
</dbReference>
<dbReference type="KEGG" id="gsu:GSU0649"/>
<dbReference type="PATRIC" id="fig|243231.5.peg.645"/>
<dbReference type="eggNOG" id="COG0164">
    <property type="taxonomic scope" value="Bacteria"/>
</dbReference>
<dbReference type="HOGENOM" id="CLU_036532_3_2_7"/>
<dbReference type="InParanoid" id="Q74FG0"/>
<dbReference type="OrthoDB" id="9803420at2"/>
<dbReference type="Proteomes" id="UP000000577">
    <property type="component" value="Chromosome"/>
</dbReference>
<dbReference type="GO" id="GO:0005737">
    <property type="term" value="C:cytoplasm"/>
    <property type="evidence" value="ECO:0007669"/>
    <property type="project" value="UniProtKB-SubCell"/>
</dbReference>
<dbReference type="GO" id="GO:0032299">
    <property type="term" value="C:ribonuclease H2 complex"/>
    <property type="evidence" value="ECO:0000318"/>
    <property type="project" value="GO_Central"/>
</dbReference>
<dbReference type="GO" id="GO:0030145">
    <property type="term" value="F:manganese ion binding"/>
    <property type="evidence" value="ECO:0007669"/>
    <property type="project" value="UniProtKB-UniRule"/>
</dbReference>
<dbReference type="GO" id="GO:0003723">
    <property type="term" value="F:RNA binding"/>
    <property type="evidence" value="ECO:0007669"/>
    <property type="project" value="InterPro"/>
</dbReference>
<dbReference type="GO" id="GO:0004523">
    <property type="term" value="F:RNA-DNA hybrid ribonuclease activity"/>
    <property type="evidence" value="ECO:0000318"/>
    <property type="project" value="GO_Central"/>
</dbReference>
<dbReference type="GO" id="GO:0043137">
    <property type="term" value="P:DNA replication, removal of RNA primer"/>
    <property type="evidence" value="ECO:0000318"/>
    <property type="project" value="GO_Central"/>
</dbReference>
<dbReference type="GO" id="GO:0006298">
    <property type="term" value="P:mismatch repair"/>
    <property type="evidence" value="ECO:0000318"/>
    <property type="project" value="GO_Central"/>
</dbReference>
<dbReference type="CDD" id="cd07182">
    <property type="entry name" value="RNase_HII_bacteria_HII_like"/>
    <property type="match status" value="1"/>
</dbReference>
<dbReference type="FunFam" id="3.30.420.10:FF:000167">
    <property type="entry name" value="Ribonuclease HII"/>
    <property type="match status" value="1"/>
</dbReference>
<dbReference type="Gene3D" id="3.30.420.10">
    <property type="entry name" value="Ribonuclease H-like superfamily/Ribonuclease H"/>
    <property type="match status" value="1"/>
</dbReference>
<dbReference type="HAMAP" id="MF_00052_B">
    <property type="entry name" value="RNase_HII_B"/>
    <property type="match status" value="1"/>
</dbReference>
<dbReference type="InterPro" id="IPR022898">
    <property type="entry name" value="RNase_HII"/>
</dbReference>
<dbReference type="InterPro" id="IPR001352">
    <property type="entry name" value="RNase_HII/HIII"/>
</dbReference>
<dbReference type="InterPro" id="IPR024567">
    <property type="entry name" value="RNase_HII/HIII_dom"/>
</dbReference>
<dbReference type="InterPro" id="IPR012337">
    <property type="entry name" value="RNaseH-like_sf"/>
</dbReference>
<dbReference type="InterPro" id="IPR036397">
    <property type="entry name" value="RNaseH_sf"/>
</dbReference>
<dbReference type="NCBIfam" id="NF000594">
    <property type="entry name" value="PRK00015.1-1"/>
    <property type="match status" value="1"/>
</dbReference>
<dbReference type="NCBIfam" id="NF000595">
    <property type="entry name" value="PRK00015.1-3"/>
    <property type="match status" value="1"/>
</dbReference>
<dbReference type="PANTHER" id="PTHR10954">
    <property type="entry name" value="RIBONUCLEASE H2 SUBUNIT A"/>
    <property type="match status" value="1"/>
</dbReference>
<dbReference type="PANTHER" id="PTHR10954:SF18">
    <property type="entry name" value="RIBONUCLEASE HII"/>
    <property type="match status" value="1"/>
</dbReference>
<dbReference type="Pfam" id="PF01351">
    <property type="entry name" value="RNase_HII"/>
    <property type="match status" value="1"/>
</dbReference>
<dbReference type="SUPFAM" id="SSF53098">
    <property type="entry name" value="Ribonuclease H-like"/>
    <property type="match status" value="1"/>
</dbReference>
<dbReference type="PROSITE" id="PS51975">
    <property type="entry name" value="RNASE_H_2"/>
    <property type="match status" value="1"/>
</dbReference>
<sequence>MSLTLFDHEPQPAVWDFESRAARRGYRTIAGIDEAGRGPLAGPVVAAAVILPFGTDLPGVDDSKKLTPARRDDLFTLIQGTALAIGVGVADHKVIDRINILQATLAAMREAVECLTDPPDYLLVDGISPVPLPVAQQTIKKGDSASISIAAASIIAKVTRDRLMAEYDQLYPGYGFAEHKGYGSASHMAAIAALGPSPIHRTTFRGVREHLGESRCR</sequence>
<name>RNH2_GEOSL</name>
<reference key="1">
    <citation type="journal article" date="2003" name="Science">
        <title>Genome of Geobacter sulfurreducens: metal reduction in subsurface environments.</title>
        <authorList>
            <person name="Methe B.A."/>
            <person name="Nelson K.E."/>
            <person name="Eisen J.A."/>
            <person name="Paulsen I.T."/>
            <person name="Nelson W.C."/>
            <person name="Heidelberg J.F."/>
            <person name="Wu D."/>
            <person name="Wu M."/>
            <person name="Ward N.L."/>
            <person name="Beanan M.J."/>
            <person name="Dodson R.J."/>
            <person name="Madupu R."/>
            <person name="Brinkac L.M."/>
            <person name="Daugherty S.C."/>
            <person name="DeBoy R.T."/>
            <person name="Durkin A.S."/>
            <person name="Gwinn M.L."/>
            <person name="Kolonay J.F."/>
            <person name="Sullivan S.A."/>
            <person name="Haft D.H."/>
            <person name="Selengut J."/>
            <person name="Davidsen T.M."/>
            <person name="Zafar N."/>
            <person name="White O."/>
            <person name="Tran B."/>
            <person name="Romero C."/>
            <person name="Forberger H.A."/>
            <person name="Weidman J.F."/>
            <person name="Khouri H.M."/>
            <person name="Feldblyum T.V."/>
            <person name="Utterback T.R."/>
            <person name="Van Aken S.E."/>
            <person name="Lovley D.R."/>
            <person name="Fraser C.M."/>
        </authorList>
    </citation>
    <scope>NUCLEOTIDE SEQUENCE [LARGE SCALE GENOMIC DNA]</scope>
    <source>
        <strain>ATCC 51573 / DSM 12127 / PCA</strain>
    </source>
</reference>
<feature type="chain" id="PRO_0000235727" description="Ribonuclease HII">
    <location>
        <begin position="1"/>
        <end position="217"/>
    </location>
</feature>
<feature type="domain" description="RNase H type-2" evidence="2">
    <location>
        <begin position="27"/>
        <end position="216"/>
    </location>
</feature>
<feature type="binding site" evidence="1">
    <location>
        <position position="33"/>
    </location>
    <ligand>
        <name>a divalent metal cation</name>
        <dbReference type="ChEBI" id="CHEBI:60240"/>
    </ligand>
</feature>
<feature type="binding site" evidence="1">
    <location>
        <position position="34"/>
    </location>
    <ligand>
        <name>a divalent metal cation</name>
        <dbReference type="ChEBI" id="CHEBI:60240"/>
    </ligand>
</feature>
<feature type="binding site" evidence="1">
    <location>
        <position position="125"/>
    </location>
    <ligand>
        <name>a divalent metal cation</name>
        <dbReference type="ChEBI" id="CHEBI:60240"/>
    </ligand>
</feature>
<proteinExistence type="inferred from homology"/>
<keyword id="KW-0963">Cytoplasm</keyword>
<keyword id="KW-0255">Endonuclease</keyword>
<keyword id="KW-0378">Hydrolase</keyword>
<keyword id="KW-0464">Manganese</keyword>
<keyword id="KW-0479">Metal-binding</keyword>
<keyword id="KW-0540">Nuclease</keyword>
<keyword id="KW-1185">Reference proteome</keyword>
<organism>
    <name type="scientific">Geobacter sulfurreducens (strain ATCC 51573 / DSM 12127 / PCA)</name>
    <dbReference type="NCBI Taxonomy" id="243231"/>
    <lineage>
        <taxon>Bacteria</taxon>
        <taxon>Pseudomonadati</taxon>
        <taxon>Thermodesulfobacteriota</taxon>
        <taxon>Desulfuromonadia</taxon>
        <taxon>Geobacterales</taxon>
        <taxon>Geobacteraceae</taxon>
        <taxon>Geobacter</taxon>
    </lineage>
</organism>
<comment type="function">
    <text evidence="1">Endonuclease that specifically degrades the RNA of RNA-DNA hybrids.</text>
</comment>
<comment type="catalytic activity">
    <reaction evidence="1">
        <text>Endonucleolytic cleavage to 5'-phosphomonoester.</text>
        <dbReference type="EC" id="3.1.26.4"/>
    </reaction>
</comment>
<comment type="cofactor">
    <cofactor evidence="1">
        <name>Mn(2+)</name>
        <dbReference type="ChEBI" id="CHEBI:29035"/>
    </cofactor>
    <cofactor evidence="1">
        <name>Mg(2+)</name>
        <dbReference type="ChEBI" id="CHEBI:18420"/>
    </cofactor>
    <text evidence="1">Manganese or magnesium. Binds 1 divalent metal ion per monomer in the absence of substrate. May bind a second metal ion after substrate binding.</text>
</comment>
<comment type="subcellular location">
    <subcellularLocation>
        <location evidence="1">Cytoplasm</location>
    </subcellularLocation>
</comment>
<comment type="similarity">
    <text evidence="1">Belongs to the RNase HII family.</text>
</comment>
<gene>
    <name evidence="1" type="primary">rnhB</name>
    <name type="ordered locus">GSU0649</name>
</gene>
<evidence type="ECO:0000255" key="1">
    <source>
        <dbReference type="HAMAP-Rule" id="MF_00052"/>
    </source>
</evidence>
<evidence type="ECO:0000255" key="2">
    <source>
        <dbReference type="PROSITE-ProRule" id="PRU01319"/>
    </source>
</evidence>
<protein>
    <recommendedName>
        <fullName evidence="1">Ribonuclease HII</fullName>
        <shortName evidence="1">RNase HII</shortName>
        <ecNumber evidence="1">3.1.26.4</ecNumber>
    </recommendedName>
</protein>